<gene>
    <name evidence="1" type="primary">rpoC</name>
    <name type="ordered locus">LSL_0198</name>
</gene>
<organism>
    <name type="scientific">Ligilactobacillus salivarius (strain UCC118)</name>
    <name type="common">Lactobacillus salivarius</name>
    <dbReference type="NCBI Taxonomy" id="362948"/>
    <lineage>
        <taxon>Bacteria</taxon>
        <taxon>Bacillati</taxon>
        <taxon>Bacillota</taxon>
        <taxon>Bacilli</taxon>
        <taxon>Lactobacillales</taxon>
        <taxon>Lactobacillaceae</taxon>
        <taxon>Ligilactobacillus</taxon>
    </lineage>
</organism>
<reference key="1">
    <citation type="journal article" date="2006" name="Proc. Natl. Acad. Sci. U.S.A.">
        <title>Multireplicon genome architecture of Lactobacillus salivarius.</title>
        <authorList>
            <person name="Claesson M.J."/>
            <person name="Li Y."/>
            <person name="Leahy S."/>
            <person name="Canchaya C."/>
            <person name="van Pijkeren J.P."/>
            <person name="Cerdeno-Tarraga A.M."/>
            <person name="Parkhill J."/>
            <person name="Flynn S."/>
            <person name="O'Sullivan G.C."/>
            <person name="Collins J.K."/>
            <person name="Higgins D."/>
            <person name="Shanahan F."/>
            <person name="Fitzgerald G.F."/>
            <person name="van Sinderen D."/>
            <person name="O'Toole P.W."/>
        </authorList>
    </citation>
    <scope>NUCLEOTIDE SEQUENCE [LARGE SCALE GENOMIC DNA]</scope>
    <source>
        <strain>UCC118</strain>
    </source>
</reference>
<sequence>MIDVNKFDSMQIGLASSDKIRSWSYGEVKKPETINYRTLKPEKDGLFDERIFGPTKDWECACGKYKRIRYKGVVCDRCGVEVTRSKVRRERMGHIELAAPVTHIWYFKGIPSRMGLVLDMSPRALEEIIYFASYVVTDAGDTALEKKQLLTEGEYREKREEYGDGFKAAMGAEAIRTLLRDVDLEKECAELKEELREATGQKRTRAVRRLDILEAFLNSGNRPDWMVMDAIPVIPPDLRPMVQLEGGRFATSDLNDLYRRVINRNNRLKRLLDLNAPGIIVQNEKRMLQEAVDALIDNGRRGRPVTGPGNRPLKSLSHMLKGKQGRFRQNLLGKRVDYSGRSVIDVGPKLKLNQMGIPHEMALELFKPFMMRELVKREMASNIKNAKRKIERRDEDIWDVLDDVIKEHPVLLNRAPTLHRLGIQAFEPVLVNGKAMRLHPLACEAYNADFDGDQMAIHVPLSDEAQAEARLLMLAAHHILAPKDGKPIISPSQDMTIGNYYITLEEAGREGEGMVFKDVNEVRTAYQNGYVHLHTRIGLQASSLAKLGTPFTDWQKERILITTAGKAIFNEILPADFPFLNEPTQENLTGMTPDKYFVEPGTDIKEFIKNQPLVGPFKSGFLSDIIAQVYKEYKVTATAELLDRMKDLGYYESTKSGLTVGIADVTVLKEKPEIIEQAHKNVATVAKQFRRGLITDEERYNRVISIWNKAKDDIQAKLVENMDPSNPIQMMSDSGARGNISNFTQLSGMRGLMAAPNGKTMELPVISNFREGLSVLEMFLSSHGARKGMTDTALKTANSGYLTRRLVDVAQDVIIREEDCHTDRGLDVTAITEGNEMIEPLYDRILGRYTMKEVKDPNTGEIIVPANVLVEESEARKIVDAGVQKVTIRSAFTCNTRHGVCERCYGRNLATGDEVEVGEAVGTVAAQSIGEPGTQLTMRNFHQGGVAGGDDITQGLPRVQELFEARNPKGRAVITEVTGVVDTVEENPAERTKEVTVKGETDTRTYSLPFTSVLKVKEGDQVHRGDALTVGSIDPKELIKVRDVLSTENYILREVQKVYRMQGVDISDKHIEIMTRQMLRKVRIMDPGDTDMLPGTLLDISQFKDRNTSAIIEGRIPATARPVLLGITKAALETNSFLSAASFQETTRVLTDAAIRGKNDPLVGLKENVIIGKTIPAGTGMKKYHDIEPEVVNSNVTDGVYSISELEEKINEQQNNVESSN</sequence>
<dbReference type="EC" id="2.7.7.6" evidence="1"/>
<dbReference type="EMBL" id="CP000233">
    <property type="protein sequence ID" value="ABD99013.1"/>
    <property type="molecule type" value="Genomic_DNA"/>
</dbReference>
<dbReference type="RefSeq" id="WP_003701972.1">
    <property type="nucleotide sequence ID" value="NC_007929.1"/>
</dbReference>
<dbReference type="RefSeq" id="YP_535096.1">
    <property type="nucleotide sequence ID" value="NC_007929.1"/>
</dbReference>
<dbReference type="SMR" id="Q1WVA4"/>
<dbReference type="STRING" id="362948.LSL_0198"/>
<dbReference type="GeneID" id="89464943"/>
<dbReference type="KEGG" id="lsl:LSL_0198"/>
<dbReference type="PATRIC" id="fig|362948.14.peg.275"/>
<dbReference type="HOGENOM" id="CLU_000524_3_1_9"/>
<dbReference type="OrthoDB" id="9815296at2"/>
<dbReference type="Proteomes" id="UP000006559">
    <property type="component" value="Chromosome"/>
</dbReference>
<dbReference type="GO" id="GO:0000428">
    <property type="term" value="C:DNA-directed RNA polymerase complex"/>
    <property type="evidence" value="ECO:0007669"/>
    <property type="project" value="UniProtKB-KW"/>
</dbReference>
<dbReference type="GO" id="GO:0003677">
    <property type="term" value="F:DNA binding"/>
    <property type="evidence" value="ECO:0007669"/>
    <property type="project" value="UniProtKB-UniRule"/>
</dbReference>
<dbReference type="GO" id="GO:0003899">
    <property type="term" value="F:DNA-directed RNA polymerase activity"/>
    <property type="evidence" value="ECO:0007669"/>
    <property type="project" value="UniProtKB-UniRule"/>
</dbReference>
<dbReference type="GO" id="GO:0000287">
    <property type="term" value="F:magnesium ion binding"/>
    <property type="evidence" value="ECO:0007669"/>
    <property type="project" value="UniProtKB-UniRule"/>
</dbReference>
<dbReference type="GO" id="GO:0008270">
    <property type="term" value="F:zinc ion binding"/>
    <property type="evidence" value="ECO:0007669"/>
    <property type="project" value="UniProtKB-UniRule"/>
</dbReference>
<dbReference type="GO" id="GO:0006351">
    <property type="term" value="P:DNA-templated transcription"/>
    <property type="evidence" value="ECO:0007669"/>
    <property type="project" value="UniProtKB-UniRule"/>
</dbReference>
<dbReference type="CDD" id="cd02655">
    <property type="entry name" value="RNAP_beta'_C"/>
    <property type="match status" value="1"/>
</dbReference>
<dbReference type="CDD" id="cd01609">
    <property type="entry name" value="RNAP_beta'_N"/>
    <property type="match status" value="1"/>
</dbReference>
<dbReference type="FunFam" id="4.10.860.120:FF:000001">
    <property type="entry name" value="DNA-directed RNA polymerase subunit beta"/>
    <property type="match status" value="1"/>
</dbReference>
<dbReference type="Gene3D" id="1.10.132.30">
    <property type="match status" value="1"/>
</dbReference>
<dbReference type="Gene3D" id="1.10.150.390">
    <property type="match status" value="1"/>
</dbReference>
<dbReference type="Gene3D" id="1.10.1790.20">
    <property type="match status" value="1"/>
</dbReference>
<dbReference type="Gene3D" id="1.10.40.90">
    <property type="match status" value="1"/>
</dbReference>
<dbReference type="Gene3D" id="2.40.40.20">
    <property type="match status" value="1"/>
</dbReference>
<dbReference type="Gene3D" id="2.40.50.100">
    <property type="match status" value="1"/>
</dbReference>
<dbReference type="Gene3D" id="4.10.860.120">
    <property type="entry name" value="RNA polymerase II, clamp domain"/>
    <property type="match status" value="1"/>
</dbReference>
<dbReference type="Gene3D" id="1.10.274.100">
    <property type="entry name" value="RNA polymerase Rpb1, domain 3"/>
    <property type="match status" value="1"/>
</dbReference>
<dbReference type="HAMAP" id="MF_01322">
    <property type="entry name" value="RNApol_bact_RpoC"/>
    <property type="match status" value="1"/>
</dbReference>
<dbReference type="InterPro" id="IPR045867">
    <property type="entry name" value="DNA-dir_RpoC_beta_prime"/>
</dbReference>
<dbReference type="InterPro" id="IPR012754">
    <property type="entry name" value="DNA-dir_RpoC_beta_prime_bact"/>
</dbReference>
<dbReference type="InterPro" id="IPR000722">
    <property type="entry name" value="RNA_pol_asu"/>
</dbReference>
<dbReference type="InterPro" id="IPR006592">
    <property type="entry name" value="RNA_pol_N"/>
</dbReference>
<dbReference type="InterPro" id="IPR007080">
    <property type="entry name" value="RNA_pol_Rpb1_1"/>
</dbReference>
<dbReference type="InterPro" id="IPR007066">
    <property type="entry name" value="RNA_pol_Rpb1_3"/>
</dbReference>
<dbReference type="InterPro" id="IPR042102">
    <property type="entry name" value="RNA_pol_Rpb1_3_sf"/>
</dbReference>
<dbReference type="InterPro" id="IPR007083">
    <property type="entry name" value="RNA_pol_Rpb1_4"/>
</dbReference>
<dbReference type="InterPro" id="IPR007081">
    <property type="entry name" value="RNA_pol_Rpb1_5"/>
</dbReference>
<dbReference type="InterPro" id="IPR044893">
    <property type="entry name" value="RNA_pol_Rpb1_clamp_domain"/>
</dbReference>
<dbReference type="InterPro" id="IPR038120">
    <property type="entry name" value="Rpb1_funnel_sf"/>
</dbReference>
<dbReference type="NCBIfam" id="TIGR02386">
    <property type="entry name" value="rpoC_TIGR"/>
    <property type="match status" value="1"/>
</dbReference>
<dbReference type="PANTHER" id="PTHR19376">
    <property type="entry name" value="DNA-DIRECTED RNA POLYMERASE"/>
    <property type="match status" value="1"/>
</dbReference>
<dbReference type="PANTHER" id="PTHR19376:SF54">
    <property type="entry name" value="DNA-DIRECTED RNA POLYMERASE SUBUNIT BETA"/>
    <property type="match status" value="1"/>
</dbReference>
<dbReference type="Pfam" id="PF04997">
    <property type="entry name" value="RNA_pol_Rpb1_1"/>
    <property type="match status" value="1"/>
</dbReference>
<dbReference type="Pfam" id="PF00623">
    <property type="entry name" value="RNA_pol_Rpb1_2"/>
    <property type="match status" value="2"/>
</dbReference>
<dbReference type="Pfam" id="PF04983">
    <property type="entry name" value="RNA_pol_Rpb1_3"/>
    <property type="match status" value="1"/>
</dbReference>
<dbReference type="Pfam" id="PF05000">
    <property type="entry name" value="RNA_pol_Rpb1_4"/>
    <property type="match status" value="1"/>
</dbReference>
<dbReference type="Pfam" id="PF04998">
    <property type="entry name" value="RNA_pol_Rpb1_5"/>
    <property type="match status" value="1"/>
</dbReference>
<dbReference type="SMART" id="SM00663">
    <property type="entry name" value="RPOLA_N"/>
    <property type="match status" value="1"/>
</dbReference>
<dbReference type="SUPFAM" id="SSF64484">
    <property type="entry name" value="beta and beta-prime subunits of DNA dependent RNA-polymerase"/>
    <property type="match status" value="1"/>
</dbReference>
<keyword id="KW-0240">DNA-directed RNA polymerase</keyword>
<keyword id="KW-0460">Magnesium</keyword>
<keyword id="KW-0479">Metal-binding</keyword>
<keyword id="KW-0548">Nucleotidyltransferase</keyword>
<keyword id="KW-1185">Reference proteome</keyword>
<keyword id="KW-0804">Transcription</keyword>
<keyword id="KW-0808">Transferase</keyword>
<keyword id="KW-0862">Zinc</keyword>
<accession>Q1WVA4</accession>
<proteinExistence type="inferred from homology"/>
<feature type="chain" id="PRO_0000308844" description="DNA-directed RNA polymerase subunit beta'">
    <location>
        <begin position="1"/>
        <end position="1221"/>
    </location>
</feature>
<feature type="binding site" evidence="1">
    <location>
        <position position="60"/>
    </location>
    <ligand>
        <name>Zn(2+)</name>
        <dbReference type="ChEBI" id="CHEBI:29105"/>
        <label>1</label>
    </ligand>
</feature>
<feature type="binding site" evidence="1">
    <location>
        <position position="62"/>
    </location>
    <ligand>
        <name>Zn(2+)</name>
        <dbReference type="ChEBI" id="CHEBI:29105"/>
        <label>1</label>
    </ligand>
</feature>
<feature type="binding site" evidence="1">
    <location>
        <position position="75"/>
    </location>
    <ligand>
        <name>Zn(2+)</name>
        <dbReference type="ChEBI" id="CHEBI:29105"/>
        <label>1</label>
    </ligand>
</feature>
<feature type="binding site" evidence="1">
    <location>
        <position position="78"/>
    </location>
    <ligand>
        <name>Zn(2+)</name>
        <dbReference type="ChEBI" id="CHEBI:29105"/>
        <label>1</label>
    </ligand>
</feature>
<feature type="binding site" evidence="1">
    <location>
        <position position="449"/>
    </location>
    <ligand>
        <name>Mg(2+)</name>
        <dbReference type="ChEBI" id="CHEBI:18420"/>
    </ligand>
</feature>
<feature type="binding site" evidence="1">
    <location>
        <position position="451"/>
    </location>
    <ligand>
        <name>Mg(2+)</name>
        <dbReference type="ChEBI" id="CHEBI:18420"/>
    </ligand>
</feature>
<feature type="binding site" evidence="1">
    <location>
        <position position="453"/>
    </location>
    <ligand>
        <name>Mg(2+)</name>
        <dbReference type="ChEBI" id="CHEBI:18420"/>
    </ligand>
</feature>
<feature type="binding site" evidence="1">
    <location>
        <position position="820"/>
    </location>
    <ligand>
        <name>Zn(2+)</name>
        <dbReference type="ChEBI" id="CHEBI:29105"/>
        <label>2</label>
    </ligand>
</feature>
<feature type="binding site" evidence="1">
    <location>
        <position position="894"/>
    </location>
    <ligand>
        <name>Zn(2+)</name>
        <dbReference type="ChEBI" id="CHEBI:29105"/>
        <label>2</label>
    </ligand>
</feature>
<feature type="binding site" evidence="1">
    <location>
        <position position="901"/>
    </location>
    <ligand>
        <name>Zn(2+)</name>
        <dbReference type="ChEBI" id="CHEBI:29105"/>
        <label>2</label>
    </ligand>
</feature>
<feature type="binding site" evidence="1">
    <location>
        <position position="904"/>
    </location>
    <ligand>
        <name>Zn(2+)</name>
        <dbReference type="ChEBI" id="CHEBI:29105"/>
        <label>2</label>
    </ligand>
</feature>
<protein>
    <recommendedName>
        <fullName evidence="1">DNA-directed RNA polymerase subunit beta'</fullName>
        <shortName evidence="1">RNAP subunit beta'</shortName>
        <ecNumber evidence="1">2.7.7.6</ecNumber>
    </recommendedName>
    <alternativeName>
        <fullName evidence="1">RNA polymerase subunit beta'</fullName>
    </alternativeName>
    <alternativeName>
        <fullName evidence="1">Transcriptase subunit beta'</fullName>
    </alternativeName>
</protein>
<evidence type="ECO:0000255" key="1">
    <source>
        <dbReference type="HAMAP-Rule" id="MF_01322"/>
    </source>
</evidence>
<comment type="function">
    <text evidence="1">DNA-dependent RNA polymerase catalyzes the transcription of DNA into RNA using the four ribonucleoside triphosphates as substrates.</text>
</comment>
<comment type="catalytic activity">
    <reaction evidence="1">
        <text>RNA(n) + a ribonucleoside 5'-triphosphate = RNA(n+1) + diphosphate</text>
        <dbReference type="Rhea" id="RHEA:21248"/>
        <dbReference type="Rhea" id="RHEA-COMP:14527"/>
        <dbReference type="Rhea" id="RHEA-COMP:17342"/>
        <dbReference type="ChEBI" id="CHEBI:33019"/>
        <dbReference type="ChEBI" id="CHEBI:61557"/>
        <dbReference type="ChEBI" id="CHEBI:140395"/>
        <dbReference type="EC" id="2.7.7.6"/>
    </reaction>
</comment>
<comment type="cofactor">
    <cofactor evidence="1">
        <name>Mg(2+)</name>
        <dbReference type="ChEBI" id="CHEBI:18420"/>
    </cofactor>
    <text evidence="1">Binds 1 Mg(2+) ion per subunit.</text>
</comment>
<comment type="cofactor">
    <cofactor evidence="1">
        <name>Zn(2+)</name>
        <dbReference type="ChEBI" id="CHEBI:29105"/>
    </cofactor>
    <text evidence="1">Binds 2 Zn(2+) ions per subunit.</text>
</comment>
<comment type="subunit">
    <text evidence="1">The RNAP catalytic core consists of 2 alpha, 1 beta, 1 beta' and 1 omega subunit. When a sigma factor is associated with the core the holoenzyme is formed, which can initiate transcription.</text>
</comment>
<comment type="similarity">
    <text evidence="1">Belongs to the RNA polymerase beta' chain family.</text>
</comment>
<name>RPOC_LIGS1</name>